<protein>
    <recommendedName>
        <fullName evidence="1">Small ribosomal subunit protein uS13</fullName>
    </recommendedName>
    <alternativeName>
        <fullName evidence="3">30S ribosomal protein S13</fullName>
    </alternativeName>
</protein>
<keyword id="KW-0687">Ribonucleoprotein</keyword>
<keyword id="KW-0689">Ribosomal protein</keyword>
<keyword id="KW-0694">RNA-binding</keyword>
<keyword id="KW-0699">rRNA-binding</keyword>
<keyword id="KW-0820">tRNA-binding</keyword>
<proteinExistence type="inferred from homology"/>
<gene>
    <name evidence="1" type="primary">rpsM</name>
    <name type="ordered locus">Clim_2205</name>
</gene>
<dbReference type="EMBL" id="CP001097">
    <property type="protein sequence ID" value="ACD91229.1"/>
    <property type="molecule type" value="Genomic_DNA"/>
</dbReference>
<dbReference type="RefSeq" id="WP_012467097.1">
    <property type="nucleotide sequence ID" value="NC_010803.1"/>
</dbReference>
<dbReference type="SMR" id="B3EGW6"/>
<dbReference type="STRING" id="290315.Clim_2205"/>
<dbReference type="KEGG" id="cli:Clim_2205"/>
<dbReference type="eggNOG" id="COG0099">
    <property type="taxonomic scope" value="Bacteria"/>
</dbReference>
<dbReference type="HOGENOM" id="CLU_103849_1_2_10"/>
<dbReference type="OrthoDB" id="9803610at2"/>
<dbReference type="Proteomes" id="UP000008841">
    <property type="component" value="Chromosome"/>
</dbReference>
<dbReference type="GO" id="GO:0005829">
    <property type="term" value="C:cytosol"/>
    <property type="evidence" value="ECO:0007669"/>
    <property type="project" value="TreeGrafter"/>
</dbReference>
<dbReference type="GO" id="GO:0015935">
    <property type="term" value="C:small ribosomal subunit"/>
    <property type="evidence" value="ECO:0007669"/>
    <property type="project" value="TreeGrafter"/>
</dbReference>
<dbReference type="GO" id="GO:0019843">
    <property type="term" value="F:rRNA binding"/>
    <property type="evidence" value="ECO:0007669"/>
    <property type="project" value="UniProtKB-UniRule"/>
</dbReference>
<dbReference type="GO" id="GO:0003735">
    <property type="term" value="F:structural constituent of ribosome"/>
    <property type="evidence" value="ECO:0007669"/>
    <property type="project" value="InterPro"/>
</dbReference>
<dbReference type="GO" id="GO:0000049">
    <property type="term" value="F:tRNA binding"/>
    <property type="evidence" value="ECO:0007669"/>
    <property type="project" value="UniProtKB-UniRule"/>
</dbReference>
<dbReference type="GO" id="GO:0006412">
    <property type="term" value="P:translation"/>
    <property type="evidence" value="ECO:0007669"/>
    <property type="project" value="UniProtKB-UniRule"/>
</dbReference>
<dbReference type="FunFam" id="1.10.8.50:FF:000001">
    <property type="entry name" value="30S ribosomal protein S13"/>
    <property type="match status" value="1"/>
</dbReference>
<dbReference type="FunFam" id="4.10.910.10:FF:000001">
    <property type="entry name" value="30S ribosomal protein S13"/>
    <property type="match status" value="1"/>
</dbReference>
<dbReference type="Gene3D" id="1.10.8.50">
    <property type="match status" value="1"/>
</dbReference>
<dbReference type="Gene3D" id="4.10.910.10">
    <property type="entry name" value="30s ribosomal protein s13, domain 2"/>
    <property type="match status" value="1"/>
</dbReference>
<dbReference type="HAMAP" id="MF_01315">
    <property type="entry name" value="Ribosomal_uS13"/>
    <property type="match status" value="1"/>
</dbReference>
<dbReference type="InterPro" id="IPR027437">
    <property type="entry name" value="Rbsml_uS13_C"/>
</dbReference>
<dbReference type="InterPro" id="IPR001892">
    <property type="entry name" value="Ribosomal_uS13"/>
</dbReference>
<dbReference type="InterPro" id="IPR010979">
    <property type="entry name" value="Ribosomal_uS13-like_H2TH"/>
</dbReference>
<dbReference type="InterPro" id="IPR019980">
    <property type="entry name" value="Ribosomal_uS13_bac-type"/>
</dbReference>
<dbReference type="InterPro" id="IPR018269">
    <property type="entry name" value="Ribosomal_uS13_CS"/>
</dbReference>
<dbReference type="NCBIfam" id="TIGR03631">
    <property type="entry name" value="uS13_bact"/>
    <property type="match status" value="1"/>
</dbReference>
<dbReference type="PANTHER" id="PTHR10871">
    <property type="entry name" value="30S RIBOSOMAL PROTEIN S13/40S RIBOSOMAL PROTEIN S18"/>
    <property type="match status" value="1"/>
</dbReference>
<dbReference type="PANTHER" id="PTHR10871:SF1">
    <property type="entry name" value="SMALL RIBOSOMAL SUBUNIT PROTEIN US13M"/>
    <property type="match status" value="1"/>
</dbReference>
<dbReference type="Pfam" id="PF00416">
    <property type="entry name" value="Ribosomal_S13"/>
    <property type="match status" value="1"/>
</dbReference>
<dbReference type="PIRSF" id="PIRSF002134">
    <property type="entry name" value="Ribosomal_S13"/>
    <property type="match status" value="1"/>
</dbReference>
<dbReference type="SUPFAM" id="SSF46946">
    <property type="entry name" value="S13-like H2TH domain"/>
    <property type="match status" value="1"/>
</dbReference>
<dbReference type="PROSITE" id="PS00646">
    <property type="entry name" value="RIBOSOMAL_S13_1"/>
    <property type="match status" value="1"/>
</dbReference>
<dbReference type="PROSITE" id="PS50159">
    <property type="entry name" value="RIBOSOMAL_S13_2"/>
    <property type="match status" value="1"/>
</dbReference>
<sequence>MRIAGVNLPLNKHAVIALTHVYGIGRTSAENILQRAGIAPERKISELNDEEAHAIREIIAEDYKVEGQARGEQQTAIKRLMDIGCYRGLRHRRSLPVRGQRTQTNARTRKGKRKTVAGKKKATKK</sequence>
<accession>B3EGW6</accession>
<name>RS13_CHLL2</name>
<organism>
    <name type="scientific">Chlorobium limicola (strain DSM 245 / NBRC 103803 / 6330)</name>
    <dbReference type="NCBI Taxonomy" id="290315"/>
    <lineage>
        <taxon>Bacteria</taxon>
        <taxon>Pseudomonadati</taxon>
        <taxon>Chlorobiota</taxon>
        <taxon>Chlorobiia</taxon>
        <taxon>Chlorobiales</taxon>
        <taxon>Chlorobiaceae</taxon>
        <taxon>Chlorobium/Pelodictyon group</taxon>
        <taxon>Chlorobium</taxon>
    </lineage>
</organism>
<evidence type="ECO:0000255" key="1">
    <source>
        <dbReference type="HAMAP-Rule" id="MF_01315"/>
    </source>
</evidence>
<evidence type="ECO:0000256" key="2">
    <source>
        <dbReference type="SAM" id="MobiDB-lite"/>
    </source>
</evidence>
<evidence type="ECO:0000305" key="3"/>
<feature type="chain" id="PRO_1000141236" description="Small ribosomal subunit protein uS13">
    <location>
        <begin position="1"/>
        <end position="125"/>
    </location>
</feature>
<feature type="region of interest" description="Disordered" evidence="2">
    <location>
        <begin position="92"/>
        <end position="125"/>
    </location>
</feature>
<feature type="compositionally biased region" description="Basic residues" evidence="2">
    <location>
        <begin position="107"/>
        <end position="125"/>
    </location>
</feature>
<comment type="function">
    <text evidence="1">Located at the top of the head of the 30S subunit, it contacts several helices of the 16S rRNA. In the 70S ribosome it contacts the 23S rRNA (bridge B1a) and protein L5 of the 50S subunit (bridge B1b), connecting the 2 subunits; these bridges are implicated in subunit movement. Contacts the tRNAs in the A and P-sites.</text>
</comment>
<comment type="subunit">
    <text evidence="1">Part of the 30S ribosomal subunit. Forms a loose heterodimer with protein S19. Forms two bridges to the 50S subunit in the 70S ribosome.</text>
</comment>
<comment type="similarity">
    <text evidence="1">Belongs to the universal ribosomal protein uS13 family.</text>
</comment>
<reference key="1">
    <citation type="submission" date="2008-05" db="EMBL/GenBank/DDBJ databases">
        <title>Complete sequence of Chlorobium limicola DSM 245.</title>
        <authorList>
            <consortium name="US DOE Joint Genome Institute"/>
            <person name="Lucas S."/>
            <person name="Copeland A."/>
            <person name="Lapidus A."/>
            <person name="Glavina del Rio T."/>
            <person name="Dalin E."/>
            <person name="Tice H."/>
            <person name="Bruce D."/>
            <person name="Goodwin L."/>
            <person name="Pitluck S."/>
            <person name="Schmutz J."/>
            <person name="Larimer F."/>
            <person name="Land M."/>
            <person name="Hauser L."/>
            <person name="Kyrpides N."/>
            <person name="Ovchinnikova G."/>
            <person name="Zhao F."/>
            <person name="Li T."/>
            <person name="Liu Z."/>
            <person name="Overmann J."/>
            <person name="Bryant D.A."/>
            <person name="Richardson P."/>
        </authorList>
    </citation>
    <scope>NUCLEOTIDE SEQUENCE [LARGE SCALE GENOMIC DNA]</scope>
    <source>
        <strain>DSM 245 / NBRC 103803 / 6330</strain>
    </source>
</reference>